<keyword id="KW-0053">Apoptosis</keyword>
<keyword id="KW-0539">Nucleus</keyword>
<keyword id="KW-1185">Reference proteome</keyword>
<accession>Q9V431</accession>
<name>API5_DROME</name>
<gene>
    <name evidence="6" type="primary">cass</name>
    <name evidence="4" type="synonym">Aac11</name>
    <name evidence="6" type="ORF">CG6582</name>
</gene>
<proteinExistence type="evidence at transcript level"/>
<evidence type="ECO:0000250" key="1"/>
<evidence type="ECO:0000256" key="2">
    <source>
        <dbReference type="SAM" id="MobiDB-lite"/>
    </source>
</evidence>
<evidence type="ECO:0000269" key="3">
    <source>
    </source>
</evidence>
<evidence type="ECO:0000303" key="4">
    <source>
    </source>
</evidence>
<evidence type="ECO:0000305" key="5"/>
<evidence type="ECO:0000312" key="6">
    <source>
        <dbReference type="FlyBase" id="FBgn0286781"/>
    </source>
</evidence>
<reference key="1">
    <citation type="journal article" date="2000" name="Science">
        <title>The genome sequence of Drosophila melanogaster.</title>
        <authorList>
            <person name="Adams M.D."/>
            <person name="Celniker S.E."/>
            <person name="Holt R.A."/>
            <person name="Evans C.A."/>
            <person name="Gocayne J.D."/>
            <person name="Amanatides P.G."/>
            <person name="Scherer S.E."/>
            <person name="Li P.W."/>
            <person name="Hoskins R.A."/>
            <person name="Galle R.F."/>
            <person name="George R.A."/>
            <person name="Lewis S.E."/>
            <person name="Richards S."/>
            <person name="Ashburner M."/>
            <person name="Henderson S.N."/>
            <person name="Sutton G.G."/>
            <person name="Wortman J.R."/>
            <person name="Yandell M.D."/>
            <person name="Zhang Q."/>
            <person name="Chen L.X."/>
            <person name="Brandon R.C."/>
            <person name="Rogers Y.-H.C."/>
            <person name="Blazej R.G."/>
            <person name="Champe M."/>
            <person name="Pfeiffer B.D."/>
            <person name="Wan K.H."/>
            <person name="Doyle C."/>
            <person name="Baxter E.G."/>
            <person name="Helt G."/>
            <person name="Nelson C.R."/>
            <person name="Miklos G.L.G."/>
            <person name="Abril J.F."/>
            <person name="Agbayani A."/>
            <person name="An H.-J."/>
            <person name="Andrews-Pfannkoch C."/>
            <person name="Baldwin D."/>
            <person name="Ballew R.M."/>
            <person name="Basu A."/>
            <person name="Baxendale J."/>
            <person name="Bayraktaroglu L."/>
            <person name="Beasley E.M."/>
            <person name="Beeson K.Y."/>
            <person name="Benos P.V."/>
            <person name="Berman B.P."/>
            <person name="Bhandari D."/>
            <person name="Bolshakov S."/>
            <person name="Borkova D."/>
            <person name="Botchan M.R."/>
            <person name="Bouck J."/>
            <person name="Brokstein P."/>
            <person name="Brottier P."/>
            <person name="Burtis K.C."/>
            <person name="Busam D.A."/>
            <person name="Butler H."/>
            <person name="Cadieu E."/>
            <person name="Center A."/>
            <person name="Chandra I."/>
            <person name="Cherry J.M."/>
            <person name="Cawley S."/>
            <person name="Dahlke C."/>
            <person name="Davenport L.B."/>
            <person name="Davies P."/>
            <person name="de Pablos B."/>
            <person name="Delcher A."/>
            <person name="Deng Z."/>
            <person name="Mays A.D."/>
            <person name="Dew I."/>
            <person name="Dietz S.M."/>
            <person name="Dodson K."/>
            <person name="Doup L.E."/>
            <person name="Downes M."/>
            <person name="Dugan-Rocha S."/>
            <person name="Dunkov B.C."/>
            <person name="Dunn P."/>
            <person name="Durbin K.J."/>
            <person name="Evangelista C.C."/>
            <person name="Ferraz C."/>
            <person name="Ferriera S."/>
            <person name="Fleischmann W."/>
            <person name="Fosler C."/>
            <person name="Gabrielian A.E."/>
            <person name="Garg N.S."/>
            <person name="Gelbart W.M."/>
            <person name="Glasser K."/>
            <person name="Glodek A."/>
            <person name="Gong F."/>
            <person name="Gorrell J.H."/>
            <person name="Gu Z."/>
            <person name="Guan P."/>
            <person name="Harris M."/>
            <person name="Harris N.L."/>
            <person name="Harvey D.A."/>
            <person name="Heiman T.J."/>
            <person name="Hernandez J.R."/>
            <person name="Houck J."/>
            <person name="Hostin D."/>
            <person name="Houston K.A."/>
            <person name="Howland T.J."/>
            <person name="Wei M.-H."/>
            <person name="Ibegwam C."/>
            <person name="Jalali M."/>
            <person name="Kalush F."/>
            <person name="Karpen G.H."/>
            <person name="Ke Z."/>
            <person name="Kennison J.A."/>
            <person name="Ketchum K.A."/>
            <person name="Kimmel B.E."/>
            <person name="Kodira C.D."/>
            <person name="Kraft C.L."/>
            <person name="Kravitz S."/>
            <person name="Kulp D."/>
            <person name="Lai Z."/>
            <person name="Lasko P."/>
            <person name="Lei Y."/>
            <person name="Levitsky A.A."/>
            <person name="Li J.H."/>
            <person name="Li Z."/>
            <person name="Liang Y."/>
            <person name="Lin X."/>
            <person name="Liu X."/>
            <person name="Mattei B."/>
            <person name="McIntosh T.C."/>
            <person name="McLeod M.P."/>
            <person name="McPherson D."/>
            <person name="Merkulov G."/>
            <person name="Milshina N.V."/>
            <person name="Mobarry C."/>
            <person name="Morris J."/>
            <person name="Moshrefi A."/>
            <person name="Mount S.M."/>
            <person name="Moy M."/>
            <person name="Murphy B."/>
            <person name="Murphy L."/>
            <person name="Muzny D.M."/>
            <person name="Nelson D.L."/>
            <person name="Nelson D.R."/>
            <person name="Nelson K.A."/>
            <person name="Nixon K."/>
            <person name="Nusskern D.R."/>
            <person name="Pacleb J.M."/>
            <person name="Palazzolo M."/>
            <person name="Pittman G.S."/>
            <person name="Pan S."/>
            <person name="Pollard J."/>
            <person name="Puri V."/>
            <person name="Reese M.G."/>
            <person name="Reinert K."/>
            <person name="Remington K."/>
            <person name="Saunders R.D.C."/>
            <person name="Scheeler F."/>
            <person name="Shen H."/>
            <person name="Shue B.C."/>
            <person name="Siden-Kiamos I."/>
            <person name="Simpson M."/>
            <person name="Skupski M.P."/>
            <person name="Smith T.J."/>
            <person name="Spier E."/>
            <person name="Spradling A.C."/>
            <person name="Stapleton M."/>
            <person name="Strong R."/>
            <person name="Sun E."/>
            <person name="Svirskas R."/>
            <person name="Tector C."/>
            <person name="Turner R."/>
            <person name="Venter E."/>
            <person name="Wang A.H."/>
            <person name="Wang X."/>
            <person name="Wang Z.-Y."/>
            <person name="Wassarman D.A."/>
            <person name="Weinstock G.M."/>
            <person name="Weissenbach J."/>
            <person name="Williams S.M."/>
            <person name="Woodage T."/>
            <person name="Worley K.C."/>
            <person name="Wu D."/>
            <person name="Yang S."/>
            <person name="Yao Q.A."/>
            <person name="Ye J."/>
            <person name="Yeh R.-F."/>
            <person name="Zaveri J.S."/>
            <person name="Zhan M."/>
            <person name="Zhang G."/>
            <person name="Zhao Q."/>
            <person name="Zheng L."/>
            <person name="Zheng X.H."/>
            <person name="Zhong F.N."/>
            <person name="Zhong W."/>
            <person name="Zhou X."/>
            <person name="Zhu S.C."/>
            <person name="Zhu X."/>
            <person name="Smith H.O."/>
            <person name="Gibbs R.A."/>
            <person name="Myers E.W."/>
            <person name="Rubin G.M."/>
            <person name="Venter J.C."/>
        </authorList>
    </citation>
    <scope>NUCLEOTIDE SEQUENCE [LARGE SCALE GENOMIC DNA]</scope>
    <source>
        <strain>Berkeley</strain>
    </source>
</reference>
<reference key="2">
    <citation type="journal article" date="2002" name="Genome Biol.">
        <title>Annotation of the Drosophila melanogaster euchromatic genome: a systematic review.</title>
        <authorList>
            <person name="Misra S."/>
            <person name="Crosby M.A."/>
            <person name="Mungall C.J."/>
            <person name="Matthews B.B."/>
            <person name="Campbell K.S."/>
            <person name="Hradecky P."/>
            <person name="Huang Y."/>
            <person name="Kaminker J.S."/>
            <person name="Millburn G.H."/>
            <person name="Prochnik S.E."/>
            <person name="Smith C.D."/>
            <person name="Tupy J.L."/>
            <person name="Whitfield E.J."/>
            <person name="Bayraktaroglu L."/>
            <person name="Berman B.P."/>
            <person name="Bettencourt B.R."/>
            <person name="Celniker S.E."/>
            <person name="de Grey A.D.N.J."/>
            <person name="Drysdale R.A."/>
            <person name="Harris N.L."/>
            <person name="Richter J."/>
            <person name="Russo S."/>
            <person name="Schroeder A.J."/>
            <person name="Shu S.Q."/>
            <person name="Stapleton M."/>
            <person name="Yamada C."/>
            <person name="Ashburner M."/>
            <person name="Gelbart W.M."/>
            <person name="Rubin G.M."/>
            <person name="Lewis S.E."/>
        </authorList>
    </citation>
    <scope>GENOME REANNOTATION</scope>
    <source>
        <strain>Berkeley</strain>
    </source>
</reference>
<reference key="3">
    <citation type="journal article" date="2006" name="PLoS Genet.">
        <title>Functional identification of Api5 as a suppressor of E2F-dependent apoptosis in vivo.</title>
        <authorList>
            <person name="Morris E.J."/>
            <person name="Michaud W.A."/>
            <person name="Ji J.Y."/>
            <person name="Moon N.S."/>
            <person name="Rocco J.W."/>
            <person name="Dyson N.J."/>
        </authorList>
    </citation>
    <scope>FUNCTION</scope>
    <scope>DISRUPTION PHENOTYPE</scope>
</reference>
<protein>
    <recommendedName>
        <fullName evidence="4">Apoptosis inhibitor 5 homolog</fullName>
        <shortName evidence="4">API-5</shortName>
    </recommendedName>
    <alternativeName>
        <fullName evidence="4">Antiapoptosis clone 11 protein homolog</fullName>
        <shortName evidence="4">AAC-11</shortName>
    </alternativeName>
    <alternativeName>
        <fullName evidence="6">Protein cassowary</fullName>
    </alternativeName>
</protein>
<sequence>MDNIERLYKCYEILSEAGDKISEHVDEYKEILKAVKGTSKEKRLASQFIGNFFKHFPDLADTAIDAQFDLCEDDDTQIRRQAIKDLPKLCQGNADATIRVGDTLAQLLILDDPTELQQVNNSLLAIIKLDTKSSIAGLFQQISTGDETTRERCLKFIATKLLTMGPTVITKEIEDYIVEEIKKALQDVTADEFHLCMTILGATKLGSTITGHAELVKLATEQAELNNTDADIIAVDDEVVERFIQCASAAAPYFSKTIKSTAFVAHVCDKLLPIKTWNMIATAVSQDQIQLRLLKVFAEMITNTDKLDNASERINAVYNVLLEYMPLPKLSDEDLGDTPPSFQFSHAECLLYALHTLGKNHPNSLSFVEDAEKLKDFRARLQYLARGTQGYIKKLEESLKGKTGEELKTEENQLKQTALKTTSNINILIRDLFHSPPIFKHDIVLSWIVPKNNKLGKRHAPITFGEKAAANGKDKDQEPEKKSRPSNDQKFYSPPSGKYSNKVNQSYGNNNRTRQRGGGGGGGSGGGYRNRRFNKY</sequence>
<feature type="chain" id="PRO_0000378097" description="Apoptosis inhibitor 5 homolog">
    <location>
        <begin position="1"/>
        <end position="536"/>
    </location>
</feature>
<feature type="region of interest" description="Disordered" evidence="2">
    <location>
        <begin position="462"/>
        <end position="536"/>
    </location>
</feature>
<feature type="compositionally biased region" description="Basic and acidic residues" evidence="2">
    <location>
        <begin position="472"/>
        <end position="487"/>
    </location>
</feature>
<feature type="compositionally biased region" description="Polar residues" evidence="2">
    <location>
        <begin position="498"/>
        <end position="507"/>
    </location>
</feature>
<feature type="compositionally biased region" description="Gly residues" evidence="2">
    <location>
        <begin position="516"/>
        <end position="528"/>
    </location>
</feature>
<organism>
    <name type="scientific">Drosophila melanogaster</name>
    <name type="common">Fruit fly</name>
    <dbReference type="NCBI Taxonomy" id="7227"/>
    <lineage>
        <taxon>Eukaryota</taxon>
        <taxon>Metazoa</taxon>
        <taxon>Ecdysozoa</taxon>
        <taxon>Arthropoda</taxon>
        <taxon>Hexapoda</taxon>
        <taxon>Insecta</taxon>
        <taxon>Pterygota</taxon>
        <taxon>Neoptera</taxon>
        <taxon>Endopterygota</taxon>
        <taxon>Diptera</taxon>
        <taxon>Brachycera</taxon>
        <taxon>Muscomorpha</taxon>
        <taxon>Ephydroidea</taxon>
        <taxon>Drosophilidae</taxon>
        <taxon>Drosophila</taxon>
        <taxon>Sophophora</taxon>
    </lineage>
</organism>
<dbReference type="EMBL" id="AF160921">
    <property type="protein sequence ID" value="AAD46861.1"/>
    <property type="molecule type" value="mRNA"/>
</dbReference>
<dbReference type="EMBL" id="AE014134">
    <property type="protein sequence ID" value="AAF53618.1"/>
    <property type="molecule type" value="Genomic_DNA"/>
</dbReference>
<dbReference type="RefSeq" id="NP_477454.1">
    <property type="nucleotide sequence ID" value="NM_058106.5"/>
</dbReference>
<dbReference type="SMR" id="Q9V431"/>
<dbReference type="BioGRID" id="61049">
    <property type="interactions" value="5"/>
</dbReference>
<dbReference type="FunCoup" id="Q9V431">
    <property type="interactions" value="3186"/>
</dbReference>
<dbReference type="IntAct" id="Q9V431">
    <property type="interactions" value="45"/>
</dbReference>
<dbReference type="MINT" id="Q9V431"/>
<dbReference type="STRING" id="7227.FBpp0080554"/>
<dbReference type="PaxDb" id="7227-FBpp0080554"/>
<dbReference type="EnsemblMetazoa" id="FBtr0081001">
    <property type="protein sequence ID" value="FBpp0080554"/>
    <property type="gene ID" value="FBgn0286781"/>
</dbReference>
<dbReference type="GeneID" id="35053"/>
<dbReference type="KEGG" id="dme:Dmel_CG6582"/>
<dbReference type="UCSC" id="CG6582-RA">
    <property type="organism name" value="d. melanogaster"/>
</dbReference>
<dbReference type="AGR" id="FB:FBgn0286781"/>
<dbReference type="CTD" id="35053"/>
<dbReference type="FlyBase" id="FBgn0286781">
    <property type="gene designation" value="cass"/>
</dbReference>
<dbReference type="VEuPathDB" id="VectorBase:FBgn0286781"/>
<dbReference type="eggNOG" id="KOG2213">
    <property type="taxonomic scope" value="Eukaryota"/>
</dbReference>
<dbReference type="GeneTree" id="ENSGT00390000010991"/>
<dbReference type="HOGENOM" id="CLU_037809_1_0_1"/>
<dbReference type="InParanoid" id="Q9V431"/>
<dbReference type="OMA" id="RCIKFLA"/>
<dbReference type="OrthoDB" id="19224at2759"/>
<dbReference type="PhylomeDB" id="Q9V431"/>
<dbReference type="BioGRID-ORCS" id="35053">
    <property type="hits" value="0 hits in 1 CRISPR screen"/>
</dbReference>
<dbReference type="ChiTaRS" id="Aac11">
    <property type="organism name" value="fly"/>
</dbReference>
<dbReference type="GenomeRNAi" id="35053"/>
<dbReference type="PRO" id="PR:Q9V431"/>
<dbReference type="Proteomes" id="UP000000803">
    <property type="component" value="Chromosome 2L"/>
</dbReference>
<dbReference type="Bgee" id="FBgn0286781">
    <property type="expression patterns" value="Expressed in spermatocyte in testis and 290 other cell types or tissues"/>
</dbReference>
<dbReference type="GO" id="GO:0005634">
    <property type="term" value="C:nucleus"/>
    <property type="evidence" value="ECO:0000250"/>
    <property type="project" value="UniProtKB"/>
</dbReference>
<dbReference type="GO" id="GO:0003723">
    <property type="term" value="F:RNA binding"/>
    <property type="evidence" value="ECO:0000318"/>
    <property type="project" value="GO_Central"/>
</dbReference>
<dbReference type="GO" id="GO:0006915">
    <property type="term" value="P:apoptotic process"/>
    <property type="evidence" value="ECO:0007669"/>
    <property type="project" value="UniProtKB-KW"/>
</dbReference>
<dbReference type="GO" id="GO:0043066">
    <property type="term" value="P:negative regulation of apoptotic process"/>
    <property type="evidence" value="ECO:0000315"/>
    <property type="project" value="UniProtKB"/>
</dbReference>
<dbReference type="Gene3D" id="1.25.10.10">
    <property type="entry name" value="Leucine-rich Repeat Variant"/>
    <property type="match status" value="1"/>
</dbReference>
<dbReference type="InterPro" id="IPR008383">
    <property type="entry name" value="API5"/>
</dbReference>
<dbReference type="InterPro" id="IPR011989">
    <property type="entry name" value="ARM-like"/>
</dbReference>
<dbReference type="InterPro" id="IPR016024">
    <property type="entry name" value="ARM-type_fold"/>
</dbReference>
<dbReference type="PANTHER" id="PTHR12758:SF19">
    <property type="entry name" value="APOPTOSIS INHIBITOR 5"/>
    <property type="match status" value="1"/>
</dbReference>
<dbReference type="PANTHER" id="PTHR12758">
    <property type="entry name" value="APOPTOSIS INHIBITOR 5-RELATED"/>
    <property type="match status" value="1"/>
</dbReference>
<dbReference type="Pfam" id="PF05918">
    <property type="entry name" value="API5"/>
    <property type="match status" value="1"/>
</dbReference>
<dbReference type="SUPFAM" id="SSF48371">
    <property type="entry name" value="ARM repeat"/>
    <property type="match status" value="1"/>
</dbReference>
<comment type="function">
    <text evidence="3">Antiapoptotic factor. Also known to efficiently suppress E2F1-induced apoptosis.</text>
</comment>
<comment type="subcellular location">
    <subcellularLocation>
        <location evidence="1">Nucleus</location>
    </subcellularLocation>
</comment>
<comment type="disruption phenotype">
    <text evidence="3">Enhanced E2f1-induced apoptosis.</text>
</comment>
<comment type="similarity">
    <text evidence="5">Belongs to the API5 family.</text>
</comment>